<keyword id="KW-0025">Alternative splicing</keyword>
<keyword id="KW-0106">Calcium</keyword>
<keyword id="KW-0472">Membrane</keyword>
<keyword id="KW-0479">Metal-binding</keyword>
<keyword id="KW-0496">Mitochondrion</keyword>
<keyword id="KW-0999">Mitochondrion inner membrane</keyword>
<keyword id="KW-0597">Phosphoprotein</keyword>
<keyword id="KW-1267">Proteomics identification</keyword>
<keyword id="KW-1185">Reference proteome</keyword>
<keyword id="KW-0677">Repeat</keyword>
<dbReference type="EMBL" id="AF218006">
    <property type="protein sequence ID" value="AAG17248.1"/>
    <property type="status" value="ALT_FRAME"/>
    <property type="molecule type" value="mRNA"/>
</dbReference>
<dbReference type="EMBL" id="AK023674">
    <property type="protein sequence ID" value="BAB14634.1"/>
    <property type="molecule type" value="mRNA"/>
</dbReference>
<dbReference type="EMBL" id="AK310565">
    <property type="status" value="NOT_ANNOTATED_CDS"/>
    <property type="molecule type" value="mRNA"/>
</dbReference>
<dbReference type="EMBL" id="AK315442">
    <property type="protein sequence ID" value="BAG37830.1"/>
    <property type="molecule type" value="mRNA"/>
</dbReference>
<dbReference type="EMBL" id="AC064852">
    <property type="status" value="NOT_ANNOTATED_CDS"/>
    <property type="molecule type" value="Genomic_DNA"/>
</dbReference>
<dbReference type="EMBL" id="AC073254">
    <property type="status" value="NOT_ANNOTATED_CDS"/>
    <property type="molecule type" value="Genomic_DNA"/>
</dbReference>
<dbReference type="EMBL" id="BC002449">
    <property type="protein sequence ID" value="AAH02449.1"/>
    <property type="molecule type" value="mRNA"/>
</dbReference>
<dbReference type="EMBL" id="BC004128">
    <property type="protein sequence ID" value="AAH04128.2"/>
    <property type="molecule type" value="mRNA"/>
</dbReference>
<dbReference type="CCDS" id="CCDS2497.1">
    <molecule id="Q9BUP0-1"/>
</dbReference>
<dbReference type="CCDS" id="CCDS58755.1">
    <molecule id="Q9BUP0-2"/>
</dbReference>
<dbReference type="RefSeq" id="NP_001230181.1">
    <molecule id="Q9BUP0-2"/>
    <property type="nucleotide sequence ID" value="NM_001243252.2"/>
</dbReference>
<dbReference type="RefSeq" id="NP_001295324.1">
    <property type="nucleotide sequence ID" value="NM_001308395.1"/>
</dbReference>
<dbReference type="RefSeq" id="NP_079478.1">
    <molecule id="Q9BUP0-1"/>
    <property type="nucleotide sequence ID" value="NM_025202.4"/>
</dbReference>
<dbReference type="SMR" id="Q9BUP0"/>
<dbReference type="BioGRID" id="123216">
    <property type="interactions" value="93"/>
</dbReference>
<dbReference type="FunCoup" id="Q9BUP0">
    <property type="interactions" value="666"/>
</dbReference>
<dbReference type="IntAct" id="Q9BUP0">
    <property type="interactions" value="45"/>
</dbReference>
<dbReference type="MINT" id="Q9BUP0"/>
<dbReference type="STRING" id="9606.ENSP00000264059"/>
<dbReference type="iPTMnet" id="Q9BUP0"/>
<dbReference type="PhosphoSitePlus" id="Q9BUP0"/>
<dbReference type="BioMuta" id="EFHD1"/>
<dbReference type="DMDM" id="20140222"/>
<dbReference type="jPOST" id="Q9BUP0"/>
<dbReference type="MassIVE" id="Q9BUP0"/>
<dbReference type="PaxDb" id="9606-ENSP00000264059"/>
<dbReference type="PeptideAtlas" id="Q9BUP0"/>
<dbReference type="ProteomicsDB" id="20103"/>
<dbReference type="ProteomicsDB" id="79116">
    <molecule id="Q9BUP0-1"/>
</dbReference>
<dbReference type="Pumba" id="Q9BUP0"/>
<dbReference type="Antibodypedia" id="34436">
    <property type="antibodies" value="301 antibodies from 30 providers"/>
</dbReference>
<dbReference type="DNASU" id="80303"/>
<dbReference type="Ensembl" id="ENST00000264059.8">
    <molecule id="Q9BUP0-1"/>
    <property type="protein sequence ID" value="ENSP00000264059.3"/>
    <property type="gene ID" value="ENSG00000115468.13"/>
</dbReference>
<dbReference type="Ensembl" id="ENST00000409613.5">
    <molecule id="Q9BUP0-2"/>
    <property type="protein sequence ID" value="ENSP00000386556.1"/>
    <property type="gene ID" value="ENSG00000115468.13"/>
</dbReference>
<dbReference type="GeneID" id="80303"/>
<dbReference type="KEGG" id="hsa:80303"/>
<dbReference type="MANE-Select" id="ENST00000264059.8">
    <property type="protein sequence ID" value="ENSP00000264059.3"/>
    <property type="RefSeq nucleotide sequence ID" value="NM_025202.4"/>
    <property type="RefSeq protein sequence ID" value="NP_079478.1"/>
</dbReference>
<dbReference type="UCSC" id="uc002vtc.4">
    <molecule id="Q9BUP0-1"/>
    <property type="organism name" value="human"/>
</dbReference>
<dbReference type="AGR" id="HGNC:29556"/>
<dbReference type="CTD" id="80303"/>
<dbReference type="DisGeNET" id="80303"/>
<dbReference type="GeneCards" id="EFHD1"/>
<dbReference type="HGNC" id="HGNC:29556">
    <property type="gene designation" value="EFHD1"/>
</dbReference>
<dbReference type="HPA" id="ENSG00000115468">
    <property type="expression patterns" value="Tissue enhanced (breast, kidney)"/>
</dbReference>
<dbReference type="MIM" id="611617">
    <property type="type" value="gene"/>
</dbReference>
<dbReference type="neXtProt" id="NX_Q9BUP0"/>
<dbReference type="OpenTargets" id="ENSG00000115468"/>
<dbReference type="PharmGKB" id="PA134935372"/>
<dbReference type="VEuPathDB" id="HostDB:ENSG00000115468"/>
<dbReference type="eggNOG" id="KOG0041">
    <property type="taxonomic scope" value="Eukaryota"/>
</dbReference>
<dbReference type="GeneTree" id="ENSGT00390000012058"/>
<dbReference type="HOGENOM" id="CLU_094429_0_0_1"/>
<dbReference type="InParanoid" id="Q9BUP0"/>
<dbReference type="OMA" id="EVKHTYR"/>
<dbReference type="OrthoDB" id="6572480at2759"/>
<dbReference type="PAN-GO" id="Q9BUP0">
    <property type="GO annotations" value="2 GO annotations based on evolutionary models"/>
</dbReference>
<dbReference type="PhylomeDB" id="Q9BUP0"/>
<dbReference type="TreeFam" id="TF320736"/>
<dbReference type="PathwayCommons" id="Q9BUP0"/>
<dbReference type="SignaLink" id="Q9BUP0"/>
<dbReference type="BioGRID-ORCS" id="80303">
    <property type="hits" value="10 hits in 1156 CRISPR screens"/>
</dbReference>
<dbReference type="ChiTaRS" id="EFHD1">
    <property type="organism name" value="human"/>
</dbReference>
<dbReference type="GenomeRNAi" id="80303"/>
<dbReference type="Pharos" id="Q9BUP0">
    <property type="development level" value="Tbio"/>
</dbReference>
<dbReference type="PRO" id="PR:Q9BUP0"/>
<dbReference type="Proteomes" id="UP000005640">
    <property type="component" value="Chromosome 2"/>
</dbReference>
<dbReference type="RNAct" id="Q9BUP0">
    <property type="molecule type" value="protein"/>
</dbReference>
<dbReference type="Bgee" id="ENSG00000115468">
    <property type="expression patterns" value="Expressed in inferior olivary complex and 191 other cell types or tissues"/>
</dbReference>
<dbReference type="ExpressionAtlas" id="Q9BUP0">
    <property type="expression patterns" value="baseline and differential"/>
</dbReference>
<dbReference type="GO" id="GO:0005743">
    <property type="term" value="C:mitochondrial inner membrane"/>
    <property type="evidence" value="ECO:0000318"/>
    <property type="project" value="GO_Central"/>
</dbReference>
<dbReference type="GO" id="GO:0005739">
    <property type="term" value="C:mitochondrion"/>
    <property type="evidence" value="ECO:0000304"/>
    <property type="project" value="UniProtKB"/>
</dbReference>
<dbReference type="GO" id="GO:0005509">
    <property type="term" value="F:calcium ion binding"/>
    <property type="evidence" value="ECO:0000318"/>
    <property type="project" value="GO_Central"/>
</dbReference>
<dbReference type="GO" id="GO:0061891">
    <property type="term" value="F:calcium ion sensor activity"/>
    <property type="evidence" value="ECO:0000315"/>
    <property type="project" value="UniProtKB"/>
</dbReference>
<dbReference type="GO" id="GO:0031175">
    <property type="term" value="P:neuron projection development"/>
    <property type="evidence" value="ECO:0007669"/>
    <property type="project" value="Ensembl"/>
</dbReference>
<dbReference type="GO" id="GO:1900069">
    <property type="term" value="P:regulation of cellular hyperosmotic salinity response"/>
    <property type="evidence" value="ECO:0000315"/>
    <property type="project" value="UniProtKB"/>
</dbReference>
<dbReference type="CDD" id="cd00051">
    <property type="entry name" value="EFh"/>
    <property type="match status" value="1"/>
</dbReference>
<dbReference type="FunFam" id="1.10.238.10:FF:000112">
    <property type="entry name" value="EF-hand domain family, member D2"/>
    <property type="match status" value="1"/>
</dbReference>
<dbReference type="Gene3D" id="1.10.238.10">
    <property type="entry name" value="EF-hand"/>
    <property type="match status" value="1"/>
</dbReference>
<dbReference type="InterPro" id="IPR011992">
    <property type="entry name" value="EF-hand-dom_pair"/>
</dbReference>
<dbReference type="InterPro" id="IPR002048">
    <property type="entry name" value="EF_hand_dom"/>
</dbReference>
<dbReference type="InterPro" id="IPR040365">
    <property type="entry name" value="EFHD1/2"/>
</dbReference>
<dbReference type="PANTHER" id="PTHR13025">
    <property type="entry name" value="EF-HAND DOMAIN-CONTAINING PROTEIN D"/>
    <property type="match status" value="1"/>
</dbReference>
<dbReference type="PANTHER" id="PTHR13025:SF5">
    <property type="entry name" value="EF-HAND DOMAIN-CONTAINING PROTEIN D1"/>
    <property type="match status" value="1"/>
</dbReference>
<dbReference type="Pfam" id="PF13499">
    <property type="entry name" value="EF-hand_7"/>
    <property type="match status" value="1"/>
</dbReference>
<dbReference type="SMART" id="SM00054">
    <property type="entry name" value="EFh"/>
    <property type="match status" value="2"/>
</dbReference>
<dbReference type="SUPFAM" id="SSF47473">
    <property type="entry name" value="EF-hand"/>
    <property type="match status" value="1"/>
</dbReference>
<dbReference type="PROSITE" id="PS50222">
    <property type="entry name" value="EF_HAND_2"/>
    <property type="match status" value="2"/>
</dbReference>
<comment type="function">
    <text evidence="1 6">Acts as a calcium sensor for mitochondrial flash (mitoflash) activation, an event characterized by stochastic bursts of superoxide production (PubMed:26975899). May play a role in neuronal differentiation (By similarity).</text>
</comment>
<comment type="interaction">
    <interactant intactId="EBI-1055068">
        <id>Q9BUP0</id>
    </interactant>
    <interactant intactId="EBI-7737399">
        <id>O95409</id>
        <label>ZIC2</label>
    </interactant>
    <organismsDiffer>false</organismsDiffer>
    <experiments>2</experiments>
</comment>
<comment type="subcellular location">
    <subcellularLocation>
        <location evidence="1">Mitochondrion inner membrane</location>
    </subcellularLocation>
</comment>
<comment type="alternative products">
    <event type="alternative splicing"/>
    <isoform>
        <id>Q9BUP0-1</id>
        <name>1</name>
        <sequence type="displayed"/>
    </isoform>
    <isoform>
        <id>Q9BUP0-2</id>
        <name>2</name>
        <sequence type="described" ref="VSP_045541"/>
    </isoform>
</comment>
<comment type="sequence caution" evidence="8">
    <conflict type="frameshift">
        <sequence resource="EMBL-CDS" id="AAG17248"/>
    </conflict>
</comment>
<sequence length="239" mass="26928">MASEELACKLERRLRREEAEESGPQLAPLGAPAPEPKPEPEPPARAPTASADAELSAQLSRRLDINEGAARPRRCRVFNPYTEFPEFSRRLIKDLESMFKLYDAGRDGFIDLMELKLMMEKLGAPQTHLGLKSMIKEVDEDFDGKLSFREFLLIFHKAAAGELQEDSGLMALAKLSEIDVALEGVKGAKNFFEAKVQALSSASKFEAELKAEQDERKREEEERRLRQAAFQKLKANFNT</sequence>
<name>EFHD1_HUMAN</name>
<protein>
    <recommendedName>
        <fullName>EF-hand domain-containing protein D1</fullName>
    </recommendedName>
    <alternativeName>
        <fullName>EF-hand domain-containing protein 1</fullName>
    </alternativeName>
    <alternativeName>
        <fullName>Swiprosin-2</fullName>
    </alternativeName>
</protein>
<gene>
    <name type="primary">EFHD1</name>
    <name type="synonym">SWS2</name>
    <name type="ORF">PP3051</name>
</gene>
<evidence type="ECO:0000250" key="1">
    <source>
        <dbReference type="UniProtKB" id="Q9D4J1"/>
    </source>
</evidence>
<evidence type="ECO:0000255" key="2">
    <source>
        <dbReference type="PROSITE-ProRule" id="PRU00448"/>
    </source>
</evidence>
<evidence type="ECO:0000256" key="3">
    <source>
        <dbReference type="SAM" id="MobiDB-lite"/>
    </source>
</evidence>
<evidence type="ECO:0000269" key="4">
    <source>
    </source>
</evidence>
<evidence type="ECO:0000269" key="5">
    <source>
    </source>
</evidence>
<evidence type="ECO:0000269" key="6">
    <source>
    </source>
</evidence>
<evidence type="ECO:0000303" key="7">
    <source>
    </source>
</evidence>
<evidence type="ECO:0000305" key="8"/>
<evidence type="ECO:0007744" key="9">
    <source>
    </source>
</evidence>
<feature type="chain" id="PRO_0000073643" description="EF-hand domain-containing protein D1">
    <location>
        <begin position="1"/>
        <end position="239"/>
    </location>
</feature>
<feature type="domain" description="EF-hand 1" evidence="2">
    <location>
        <begin position="90"/>
        <end position="125"/>
    </location>
</feature>
<feature type="domain" description="EF-hand 2" evidence="2">
    <location>
        <begin position="126"/>
        <end position="161"/>
    </location>
</feature>
<feature type="region of interest" description="Disordered" evidence="3">
    <location>
        <begin position="1"/>
        <end position="53"/>
    </location>
</feature>
<feature type="compositionally biased region" description="Basic and acidic residues" evidence="3">
    <location>
        <begin position="1"/>
        <end position="18"/>
    </location>
</feature>
<feature type="binding site" evidence="8">
    <location>
        <position position="103"/>
    </location>
    <ligand>
        <name>Ca(2+)</name>
        <dbReference type="ChEBI" id="CHEBI:29108"/>
        <label>1</label>
    </ligand>
</feature>
<feature type="binding site" evidence="8">
    <location>
        <position position="107"/>
    </location>
    <ligand>
        <name>Ca(2+)</name>
        <dbReference type="ChEBI" id="CHEBI:29108"/>
        <label>1</label>
    </ligand>
</feature>
<feature type="binding site" evidence="8">
    <location>
        <position position="114"/>
    </location>
    <ligand>
        <name>Ca(2+)</name>
        <dbReference type="ChEBI" id="CHEBI:29108"/>
        <label>1</label>
    </ligand>
</feature>
<feature type="binding site" evidence="8">
    <location>
        <position position="139"/>
    </location>
    <ligand>
        <name>Ca(2+)</name>
        <dbReference type="ChEBI" id="CHEBI:29108"/>
        <label>2</label>
    </ligand>
</feature>
<feature type="binding site" evidence="8">
    <location>
        <position position="141"/>
    </location>
    <ligand>
        <name>Ca(2+)</name>
        <dbReference type="ChEBI" id="CHEBI:29108"/>
        <label>2</label>
    </ligand>
</feature>
<feature type="binding site" evidence="8">
    <location>
        <position position="143"/>
    </location>
    <ligand>
        <name>Ca(2+)</name>
        <dbReference type="ChEBI" id="CHEBI:29108"/>
        <label>2</label>
    </ligand>
</feature>
<feature type="binding site" evidence="8">
    <location>
        <position position="145"/>
    </location>
    <ligand>
        <name>Ca(2+)</name>
        <dbReference type="ChEBI" id="CHEBI:29108"/>
        <label>2</label>
    </ligand>
</feature>
<feature type="binding site" evidence="8">
    <location>
        <position position="150"/>
    </location>
    <ligand>
        <name>Ca(2+)</name>
        <dbReference type="ChEBI" id="CHEBI:29108"/>
        <label>2</label>
    </ligand>
</feature>
<feature type="modified residue" description="Phosphoserine" evidence="9">
    <location>
        <position position="201"/>
    </location>
</feature>
<feature type="splice variant" id="VSP_045541" description="In isoform 2." evidence="7">
    <original>MASEELACKLERRLRREEAEESGPQLAPLGAPAPEPKPEPEPPARAPTASADAELSAQLSRRLDINEGAARPRRCRVFNPYTEFPEFSRRLIKDLESMFKL</original>
    <variation>MGELQ</variation>
    <location>
        <begin position="1"/>
        <end position="101"/>
    </location>
</feature>
<feature type="sequence variant" id="VAR_047966" description="In dbSNP:rs11550699." evidence="4 5">
    <original>K</original>
    <variation>R</variation>
    <location>
        <position position="186"/>
    </location>
</feature>
<feature type="mutagenesis site" description="In mtEFHD1; abolished ability to enhance mitoflash activity; when associated with K-114; A-139 and K-150." evidence="6">
    <original>D</original>
    <variation>A</variation>
    <location>
        <position position="103"/>
    </location>
</feature>
<feature type="mutagenesis site" description="In mtEFHD1; abolished ability to enhance mitoflash activity; when associated with A-103; A-139 and K-150." evidence="6">
    <original>E</original>
    <variation>K</variation>
    <location>
        <position position="114"/>
    </location>
</feature>
<feature type="mutagenesis site" description="In mtEFHD1; abolished ability to enhance mitoflash activity; when associated with A-103; K-114 and K-150." evidence="6">
    <original>D</original>
    <variation>A</variation>
    <location>
        <position position="139"/>
    </location>
</feature>
<feature type="mutagenesis site" description="In mtEFHD1; abolished ability to enhance mitoflash activity; when associated with A-103; K-114 and A-139." evidence="6">
    <original>E</original>
    <variation>K</variation>
    <location>
        <position position="150"/>
    </location>
</feature>
<reference key="1">
    <citation type="journal article" date="2004" name="Proc. Natl. Acad. Sci. U.S.A.">
        <title>Large-scale cDNA transfection screening for genes related to cancer development and progression.</title>
        <authorList>
            <person name="Wan D."/>
            <person name="Gong Y."/>
            <person name="Qin W."/>
            <person name="Zhang P."/>
            <person name="Li J."/>
            <person name="Wei L."/>
            <person name="Zhou X."/>
            <person name="Li H."/>
            <person name="Qiu X."/>
            <person name="Zhong F."/>
            <person name="He L."/>
            <person name="Yu J."/>
            <person name="Yao G."/>
            <person name="Jiang H."/>
            <person name="Qian L."/>
            <person name="Yu Y."/>
            <person name="Shu H."/>
            <person name="Chen X."/>
            <person name="Xu H."/>
            <person name="Guo M."/>
            <person name="Pan Z."/>
            <person name="Chen Y."/>
            <person name="Ge C."/>
            <person name="Yang S."/>
            <person name="Gu J."/>
        </authorList>
    </citation>
    <scope>NUCLEOTIDE SEQUENCE [LARGE SCALE MRNA] (ISOFORM 1)</scope>
</reference>
<reference key="2">
    <citation type="journal article" date="2004" name="Nat. Genet.">
        <title>Complete sequencing and characterization of 21,243 full-length human cDNAs.</title>
        <authorList>
            <person name="Ota T."/>
            <person name="Suzuki Y."/>
            <person name="Nishikawa T."/>
            <person name="Otsuki T."/>
            <person name="Sugiyama T."/>
            <person name="Irie R."/>
            <person name="Wakamatsu A."/>
            <person name="Hayashi K."/>
            <person name="Sato H."/>
            <person name="Nagai K."/>
            <person name="Kimura K."/>
            <person name="Makita H."/>
            <person name="Sekine M."/>
            <person name="Obayashi M."/>
            <person name="Nishi T."/>
            <person name="Shibahara T."/>
            <person name="Tanaka T."/>
            <person name="Ishii S."/>
            <person name="Yamamoto J."/>
            <person name="Saito K."/>
            <person name="Kawai Y."/>
            <person name="Isono Y."/>
            <person name="Nakamura Y."/>
            <person name="Nagahari K."/>
            <person name="Murakami K."/>
            <person name="Yasuda T."/>
            <person name="Iwayanagi T."/>
            <person name="Wagatsuma M."/>
            <person name="Shiratori A."/>
            <person name="Sudo H."/>
            <person name="Hosoiri T."/>
            <person name="Kaku Y."/>
            <person name="Kodaira H."/>
            <person name="Kondo H."/>
            <person name="Sugawara M."/>
            <person name="Takahashi M."/>
            <person name="Kanda K."/>
            <person name="Yokoi T."/>
            <person name="Furuya T."/>
            <person name="Kikkawa E."/>
            <person name="Omura Y."/>
            <person name="Abe K."/>
            <person name="Kamihara K."/>
            <person name="Katsuta N."/>
            <person name="Sato K."/>
            <person name="Tanikawa M."/>
            <person name="Yamazaki M."/>
            <person name="Ninomiya K."/>
            <person name="Ishibashi T."/>
            <person name="Yamashita H."/>
            <person name="Murakawa K."/>
            <person name="Fujimori K."/>
            <person name="Tanai H."/>
            <person name="Kimata M."/>
            <person name="Watanabe M."/>
            <person name="Hiraoka S."/>
            <person name="Chiba Y."/>
            <person name="Ishida S."/>
            <person name="Ono Y."/>
            <person name="Takiguchi S."/>
            <person name="Watanabe S."/>
            <person name="Yosida M."/>
            <person name="Hotuta T."/>
            <person name="Kusano J."/>
            <person name="Kanehori K."/>
            <person name="Takahashi-Fujii A."/>
            <person name="Hara H."/>
            <person name="Tanase T.-O."/>
            <person name="Nomura Y."/>
            <person name="Togiya S."/>
            <person name="Komai F."/>
            <person name="Hara R."/>
            <person name="Takeuchi K."/>
            <person name="Arita M."/>
            <person name="Imose N."/>
            <person name="Musashino K."/>
            <person name="Yuuki H."/>
            <person name="Oshima A."/>
            <person name="Sasaki N."/>
            <person name="Aotsuka S."/>
            <person name="Yoshikawa Y."/>
            <person name="Matsunawa H."/>
            <person name="Ichihara T."/>
            <person name="Shiohata N."/>
            <person name="Sano S."/>
            <person name="Moriya S."/>
            <person name="Momiyama H."/>
            <person name="Satoh N."/>
            <person name="Takami S."/>
            <person name="Terashima Y."/>
            <person name="Suzuki O."/>
            <person name="Nakagawa S."/>
            <person name="Senoh A."/>
            <person name="Mizoguchi H."/>
            <person name="Goto Y."/>
            <person name="Shimizu F."/>
            <person name="Wakebe H."/>
            <person name="Hishigaki H."/>
            <person name="Watanabe T."/>
            <person name="Sugiyama A."/>
            <person name="Takemoto M."/>
            <person name="Kawakami B."/>
            <person name="Yamazaki M."/>
            <person name="Watanabe K."/>
            <person name="Kumagai A."/>
            <person name="Itakura S."/>
            <person name="Fukuzumi Y."/>
            <person name="Fujimori Y."/>
            <person name="Komiyama M."/>
            <person name="Tashiro H."/>
            <person name="Tanigami A."/>
            <person name="Fujiwara T."/>
            <person name="Ono T."/>
            <person name="Yamada K."/>
            <person name="Fujii Y."/>
            <person name="Ozaki K."/>
            <person name="Hirao M."/>
            <person name="Ohmori Y."/>
            <person name="Kawabata A."/>
            <person name="Hikiji T."/>
            <person name="Kobatake N."/>
            <person name="Inagaki H."/>
            <person name="Ikema Y."/>
            <person name="Okamoto S."/>
            <person name="Okitani R."/>
            <person name="Kawakami T."/>
            <person name="Noguchi S."/>
            <person name="Itoh T."/>
            <person name="Shigeta K."/>
            <person name="Senba T."/>
            <person name="Matsumura K."/>
            <person name="Nakajima Y."/>
            <person name="Mizuno T."/>
            <person name="Morinaga M."/>
            <person name="Sasaki M."/>
            <person name="Togashi T."/>
            <person name="Oyama M."/>
            <person name="Hata H."/>
            <person name="Watanabe M."/>
            <person name="Komatsu T."/>
            <person name="Mizushima-Sugano J."/>
            <person name="Satoh T."/>
            <person name="Shirai Y."/>
            <person name="Takahashi Y."/>
            <person name="Nakagawa K."/>
            <person name="Okumura K."/>
            <person name="Nagase T."/>
            <person name="Nomura N."/>
            <person name="Kikuchi H."/>
            <person name="Masuho Y."/>
            <person name="Yamashita R."/>
            <person name="Nakai K."/>
            <person name="Yada T."/>
            <person name="Nakamura Y."/>
            <person name="Ohara O."/>
            <person name="Isogai T."/>
            <person name="Sugano S."/>
        </authorList>
    </citation>
    <scope>NUCLEOTIDE SEQUENCE [LARGE SCALE MRNA] (ISOFORMS 1 AND 2)</scope>
    <scope>VARIANT ARG-186</scope>
    <source>
        <tissue>Heart</tissue>
        <tissue>Placenta</tissue>
        <tissue>Thymus</tissue>
    </source>
</reference>
<reference key="3">
    <citation type="journal article" date="2005" name="Nature">
        <title>Generation and annotation of the DNA sequences of human chromosomes 2 and 4.</title>
        <authorList>
            <person name="Hillier L.W."/>
            <person name="Graves T.A."/>
            <person name="Fulton R.S."/>
            <person name="Fulton L.A."/>
            <person name="Pepin K.H."/>
            <person name="Minx P."/>
            <person name="Wagner-McPherson C."/>
            <person name="Layman D."/>
            <person name="Wylie K."/>
            <person name="Sekhon M."/>
            <person name="Becker M.C."/>
            <person name="Fewell G.A."/>
            <person name="Delehaunty K.D."/>
            <person name="Miner T.L."/>
            <person name="Nash W.E."/>
            <person name="Kremitzki C."/>
            <person name="Oddy L."/>
            <person name="Du H."/>
            <person name="Sun H."/>
            <person name="Bradshaw-Cordum H."/>
            <person name="Ali J."/>
            <person name="Carter J."/>
            <person name="Cordes M."/>
            <person name="Harris A."/>
            <person name="Isak A."/>
            <person name="van Brunt A."/>
            <person name="Nguyen C."/>
            <person name="Du F."/>
            <person name="Courtney L."/>
            <person name="Kalicki J."/>
            <person name="Ozersky P."/>
            <person name="Abbott S."/>
            <person name="Armstrong J."/>
            <person name="Belter E.A."/>
            <person name="Caruso L."/>
            <person name="Cedroni M."/>
            <person name="Cotton M."/>
            <person name="Davidson T."/>
            <person name="Desai A."/>
            <person name="Elliott G."/>
            <person name="Erb T."/>
            <person name="Fronick C."/>
            <person name="Gaige T."/>
            <person name="Haakenson W."/>
            <person name="Haglund K."/>
            <person name="Holmes A."/>
            <person name="Harkins R."/>
            <person name="Kim K."/>
            <person name="Kruchowski S.S."/>
            <person name="Strong C.M."/>
            <person name="Grewal N."/>
            <person name="Goyea E."/>
            <person name="Hou S."/>
            <person name="Levy A."/>
            <person name="Martinka S."/>
            <person name="Mead K."/>
            <person name="McLellan M.D."/>
            <person name="Meyer R."/>
            <person name="Randall-Maher J."/>
            <person name="Tomlinson C."/>
            <person name="Dauphin-Kohlberg S."/>
            <person name="Kozlowicz-Reilly A."/>
            <person name="Shah N."/>
            <person name="Swearengen-Shahid S."/>
            <person name="Snider J."/>
            <person name="Strong J.T."/>
            <person name="Thompson J."/>
            <person name="Yoakum M."/>
            <person name="Leonard S."/>
            <person name="Pearman C."/>
            <person name="Trani L."/>
            <person name="Radionenko M."/>
            <person name="Waligorski J.E."/>
            <person name="Wang C."/>
            <person name="Rock S.M."/>
            <person name="Tin-Wollam A.-M."/>
            <person name="Maupin R."/>
            <person name="Latreille P."/>
            <person name="Wendl M.C."/>
            <person name="Yang S.-P."/>
            <person name="Pohl C."/>
            <person name="Wallis J.W."/>
            <person name="Spieth J."/>
            <person name="Bieri T.A."/>
            <person name="Berkowicz N."/>
            <person name="Nelson J.O."/>
            <person name="Osborne J."/>
            <person name="Ding L."/>
            <person name="Meyer R."/>
            <person name="Sabo A."/>
            <person name="Shotland Y."/>
            <person name="Sinha P."/>
            <person name="Wohldmann P.E."/>
            <person name="Cook L.L."/>
            <person name="Hickenbotham M.T."/>
            <person name="Eldred J."/>
            <person name="Williams D."/>
            <person name="Jones T.A."/>
            <person name="She X."/>
            <person name="Ciccarelli F.D."/>
            <person name="Izaurralde E."/>
            <person name="Taylor J."/>
            <person name="Schmutz J."/>
            <person name="Myers R.M."/>
            <person name="Cox D.R."/>
            <person name="Huang X."/>
            <person name="McPherson J.D."/>
            <person name="Mardis E.R."/>
            <person name="Clifton S.W."/>
            <person name="Warren W.C."/>
            <person name="Chinwalla A.T."/>
            <person name="Eddy S.R."/>
            <person name="Marra M.A."/>
            <person name="Ovcharenko I."/>
            <person name="Furey T.S."/>
            <person name="Miller W."/>
            <person name="Eichler E.E."/>
            <person name="Bork P."/>
            <person name="Suyama M."/>
            <person name="Torrents D."/>
            <person name="Waterston R.H."/>
            <person name="Wilson R.K."/>
        </authorList>
    </citation>
    <scope>NUCLEOTIDE SEQUENCE [LARGE SCALE GENOMIC DNA]</scope>
</reference>
<reference key="4">
    <citation type="journal article" date="2004" name="Genome Res.">
        <title>The status, quality, and expansion of the NIH full-length cDNA project: the Mammalian Gene Collection (MGC).</title>
        <authorList>
            <consortium name="The MGC Project Team"/>
        </authorList>
    </citation>
    <scope>NUCLEOTIDE SEQUENCE [LARGE SCALE MRNA] (ISOFORM 1)</scope>
    <scope>VARIANT ARG-186</scope>
    <source>
        <tissue>Eye</tissue>
        <tissue>Lung</tissue>
    </source>
</reference>
<reference key="5">
    <citation type="journal article" date="2014" name="J. Proteomics">
        <title>An enzyme assisted RP-RPLC approach for in-depth analysis of human liver phosphoproteome.</title>
        <authorList>
            <person name="Bian Y."/>
            <person name="Song C."/>
            <person name="Cheng K."/>
            <person name="Dong M."/>
            <person name="Wang F."/>
            <person name="Huang J."/>
            <person name="Sun D."/>
            <person name="Wang L."/>
            <person name="Ye M."/>
            <person name="Zou H."/>
        </authorList>
    </citation>
    <scope>PHOSPHORYLATION [LARGE SCALE ANALYSIS] AT SER-201</scope>
    <scope>IDENTIFICATION BY MASS SPECTROMETRY [LARGE SCALE ANALYSIS]</scope>
    <source>
        <tissue>Liver</tissue>
    </source>
</reference>
<reference key="6">
    <citation type="journal article" date="2016" name="Cell Calcium">
        <title>Identification of EFHD1 as a novel Ca(2+) sensor for mitoflash activation.</title>
        <authorList>
            <person name="Hou T."/>
            <person name="Jian C."/>
            <person name="Xu J."/>
            <person name="Huang A.Y."/>
            <person name="Xi J."/>
            <person name="Hu K."/>
            <person name="Wei L."/>
            <person name="Cheng H."/>
            <person name="Wang X."/>
        </authorList>
    </citation>
    <scope>FUNCTION</scope>
    <scope>MUTAGENESIS OF ASP-103; GLU-114; ASP-139 AND GLU-150</scope>
</reference>
<organism>
    <name type="scientific">Homo sapiens</name>
    <name type="common">Human</name>
    <dbReference type="NCBI Taxonomy" id="9606"/>
    <lineage>
        <taxon>Eukaryota</taxon>
        <taxon>Metazoa</taxon>
        <taxon>Chordata</taxon>
        <taxon>Craniata</taxon>
        <taxon>Vertebrata</taxon>
        <taxon>Euteleostomi</taxon>
        <taxon>Mammalia</taxon>
        <taxon>Eutheria</taxon>
        <taxon>Euarchontoglires</taxon>
        <taxon>Primates</taxon>
        <taxon>Haplorrhini</taxon>
        <taxon>Catarrhini</taxon>
        <taxon>Hominidae</taxon>
        <taxon>Homo</taxon>
    </lineage>
</organism>
<proteinExistence type="evidence at protein level"/>
<accession>Q9BUP0</accession>
<accession>B2RD83</accession>
<accession>E9PFH3</accession>
<accession>Q9BTF8</accession>
<accession>Q9H8I2</accession>
<accession>Q9HBQ0</accession>